<keyword id="KW-0342">GTP-binding</keyword>
<keyword id="KW-0547">Nucleotide-binding</keyword>
<keyword id="KW-0548">Nucleotidyltransferase</keyword>
<keyword id="KW-1185">Reference proteome</keyword>
<keyword id="KW-0808">Transferase</keyword>
<feature type="chain" id="PRO_0000307166" description="Mannose-1-phosphate guanyltransferase beta-A">
    <location>
        <begin position="1"/>
        <end position="360"/>
    </location>
</feature>
<name>GMPBA_XENLA</name>
<proteinExistence type="evidence at transcript level"/>
<sequence length="360" mass="40152">MKALILVGGYGTRLRPLTLSVPKPLVDFCNKPILLHQVEALVKAGVTHVILAVSYMSDMLEKEMKEQEKRLGIRISMSHEKEPLGTAGPLALARELLTENSEPFFVLNSDVICDFPFEDMVRFHKHHGKEGTIVVTKVEEPSKYGVVVYETESGQIQRFVEKPQVFVSNKINSGLYIFSPAVLDRIQLRPTSIEKEIFPAMAQEGQLYAMELQGFWMDIGQPKDFLTGMCMYLQSVRQKHPEWLHAGPGFIGNVLVDPTAKIGQNCSIGPNVTIGPGVTVEDGVRIKRCTVMKGSRLHSHSWLESSIVGWSSSVGQWVRMENVTVLGEDVIVNDELYLNGANVLPHKCISESVPEPRIIM</sequence>
<evidence type="ECO:0000305" key="1"/>
<protein>
    <recommendedName>
        <fullName>Mannose-1-phosphate guanyltransferase beta-A</fullName>
        <ecNumber>2.7.7.13</ecNumber>
    </recommendedName>
    <alternativeName>
        <fullName>GDP-mannose pyrophosphorylase B-A</fullName>
    </alternativeName>
    <alternativeName>
        <fullName>GTP-mannose-1-phosphate guanylyltransferase beta-A</fullName>
    </alternativeName>
</protein>
<gene>
    <name type="primary">gmppb-a</name>
</gene>
<organism>
    <name type="scientific">Xenopus laevis</name>
    <name type="common">African clawed frog</name>
    <dbReference type="NCBI Taxonomy" id="8355"/>
    <lineage>
        <taxon>Eukaryota</taxon>
        <taxon>Metazoa</taxon>
        <taxon>Chordata</taxon>
        <taxon>Craniata</taxon>
        <taxon>Vertebrata</taxon>
        <taxon>Euteleostomi</taxon>
        <taxon>Amphibia</taxon>
        <taxon>Batrachia</taxon>
        <taxon>Anura</taxon>
        <taxon>Pipoidea</taxon>
        <taxon>Pipidae</taxon>
        <taxon>Xenopodinae</taxon>
        <taxon>Xenopus</taxon>
        <taxon>Xenopus</taxon>
    </lineage>
</organism>
<accession>Q68EY9</accession>
<dbReference type="EC" id="2.7.7.13"/>
<dbReference type="EMBL" id="BC080059">
    <property type="protein sequence ID" value="AAH80059.1"/>
    <property type="molecule type" value="mRNA"/>
</dbReference>
<dbReference type="RefSeq" id="NP_001087522.1">
    <property type="nucleotide sequence ID" value="NM_001094053.1"/>
</dbReference>
<dbReference type="SMR" id="Q68EY9"/>
<dbReference type="DNASU" id="447346"/>
<dbReference type="GeneID" id="447346"/>
<dbReference type="KEGG" id="xla:447346"/>
<dbReference type="AGR" id="Xenbase:XB-GENE-922662"/>
<dbReference type="CTD" id="447346"/>
<dbReference type="Xenbase" id="XB-GENE-922662">
    <property type="gene designation" value="gmppb.L"/>
</dbReference>
<dbReference type="OrthoDB" id="1733332at2759"/>
<dbReference type="UniPathway" id="UPA00126">
    <property type="reaction ID" value="UER00930"/>
</dbReference>
<dbReference type="Proteomes" id="UP000186698">
    <property type="component" value="Chromosome 4L"/>
</dbReference>
<dbReference type="Bgee" id="447346">
    <property type="expression patterns" value="Expressed in liver and 19 other cell types or tissues"/>
</dbReference>
<dbReference type="GO" id="GO:0005737">
    <property type="term" value="C:cytoplasm"/>
    <property type="evidence" value="ECO:0000318"/>
    <property type="project" value="GO_Central"/>
</dbReference>
<dbReference type="GO" id="GO:0005525">
    <property type="term" value="F:GTP binding"/>
    <property type="evidence" value="ECO:0007669"/>
    <property type="project" value="UniProtKB-KW"/>
</dbReference>
<dbReference type="GO" id="GO:0004475">
    <property type="term" value="F:mannose-1-phosphate guanylyltransferase (GTP) activity"/>
    <property type="evidence" value="ECO:0000318"/>
    <property type="project" value="GO_Central"/>
</dbReference>
<dbReference type="GO" id="GO:0009298">
    <property type="term" value="P:GDP-mannose biosynthetic process"/>
    <property type="evidence" value="ECO:0000318"/>
    <property type="project" value="GO_Central"/>
</dbReference>
<dbReference type="GO" id="GO:0006486">
    <property type="term" value="P:protein glycosylation"/>
    <property type="evidence" value="ECO:0000318"/>
    <property type="project" value="GO_Central"/>
</dbReference>
<dbReference type="CDD" id="cd06425">
    <property type="entry name" value="M1P_guanylylT_B_like_N"/>
    <property type="match status" value="1"/>
</dbReference>
<dbReference type="FunFam" id="2.160.10.10:FF:000018">
    <property type="entry name" value="Mannose-1-phosphate guanyltransferase beta"/>
    <property type="match status" value="1"/>
</dbReference>
<dbReference type="FunFam" id="3.90.550.10:FF:000013">
    <property type="entry name" value="mannose-1-phosphate guanyltransferase beta"/>
    <property type="match status" value="1"/>
</dbReference>
<dbReference type="Gene3D" id="2.160.10.10">
    <property type="entry name" value="Hexapeptide repeat proteins"/>
    <property type="match status" value="1"/>
</dbReference>
<dbReference type="Gene3D" id="3.90.550.10">
    <property type="entry name" value="Spore Coat Polysaccharide Biosynthesis Protein SpsA, Chain A"/>
    <property type="match status" value="1"/>
</dbReference>
<dbReference type="InterPro" id="IPR056729">
    <property type="entry name" value="GMPPB_C"/>
</dbReference>
<dbReference type="InterPro" id="IPR045233">
    <property type="entry name" value="GMPPB_N"/>
</dbReference>
<dbReference type="InterPro" id="IPR018357">
    <property type="entry name" value="Hexapep_transf_CS"/>
</dbReference>
<dbReference type="InterPro" id="IPR050486">
    <property type="entry name" value="Mannose-1P_guanyltransferase"/>
</dbReference>
<dbReference type="InterPro" id="IPR005835">
    <property type="entry name" value="NTP_transferase_dom"/>
</dbReference>
<dbReference type="InterPro" id="IPR029044">
    <property type="entry name" value="Nucleotide-diphossugar_trans"/>
</dbReference>
<dbReference type="PANTHER" id="PTHR22572">
    <property type="entry name" value="SUGAR-1-PHOSPHATE GUANYL TRANSFERASE"/>
    <property type="match status" value="1"/>
</dbReference>
<dbReference type="Pfam" id="PF25087">
    <property type="entry name" value="GMPPB_C"/>
    <property type="match status" value="1"/>
</dbReference>
<dbReference type="Pfam" id="PF00483">
    <property type="entry name" value="NTP_transferase"/>
    <property type="match status" value="1"/>
</dbReference>
<dbReference type="SUPFAM" id="SSF53448">
    <property type="entry name" value="Nucleotide-diphospho-sugar transferases"/>
    <property type="match status" value="1"/>
</dbReference>
<dbReference type="PROSITE" id="PS00101">
    <property type="entry name" value="HEXAPEP_TRANSFERASES"/>
    <property type="match status" value="1"/>
</dbReference>
<comment type="catalytic activity">
    <reaction>
        <text>alpha-D-mannose 1-phosphate + GTP + H(+) = GDP-alpha-D-mannose + diphosphate</text>
        <dbReference type="Rhea" id="RHEA:15229"/>
        <dbReference type="ChEBI" id="CHEBI:15378"/>
        <dbReference type="ChEBI" id="CHEBI:33019"/>
        <dbReference type="ChEBI" id="CHEBI:37565"/>
        <dbReference type="ChEBI" id="CHEBI:57527"/>
        <dbReference type="ChEBI" id="CHEBI:58409"/>
        <dbReference type="EC" id="2.7.7.13"/>
    </reaction>
</comment>
<comment type="pathway">
    <text>Nucleotide-sugar biosynthesis; GDP-alpha-D-mannose biosynthesis; GDP-alpha-D-mannose from alpha-D-mannose 1-phosphate (GTP route): step 1/1.</text>
</comment>
<comment type="similarity">
    <text evidence="1">Belongs to the transferase hexapeptide repeat family.</text>
</comment>
<reference key="1">
    <citation type="submission" date="2004-08" db="EMBL/GenBank/DDBJ databases">
        <authorList>
            <consortium name="NIH - Xenopus Gene Collection (XGC) project"/>
        </authorList>
    </citation>
    <scope>NUCLEOTIDE SEQUENCE [LARGE SCALE MRNA]</scope>
    <source>
        <tissue>Eye</tissue>
    </source>
</reference>